<evidence type="ECO:0000255" key="1">
    <source>
        <dbReference type="PROSITE-ProRule" id="PRU00303"/>
    </source>
</evidence>
<evidence type="ECO:0000305" key="2"/>
<feature type="signal peptide" evidence="1">
    <location>
        <begin position="1"/>
        <end position="23"/>
    </location>
</feature>
<feature type="chain" id="PRO_0000282172" description="Uncharacterized lipoprotein MW0071">
    <location>
        <begin position="24"/>
        <end position="255"/>
    </location>
</feature>
<feature type="lipid moiety-binding region" description="N-palmitoyl cysteine" evidence="1">
    <location>
        <position position="24"/>
    </location>
</feature>
<feature type="lipid moiety-binding region" description="S-diacylglycerol cysteine" evidence="1">
    <location>
        <position position="24"/>
    </location>
</feature>
<sequence length="255" mass="29656">MKRLNKLVLGIIFLFLVISITAGCGIGKEAEVKKSFEKTLSMYPIKNLEDLYDKEGYRDDQFDKNDKGTWIINSEMVIQPNNEDMVAKGMVLYMNRNTKTTNGYYYVDVTKDEDEGKPHDNEKRYPVKMVDNKIIPTKEIKDEKIKKEIENFKFFVQYGDFKNLKNYKDGDISYNPEVPSYSAKYQLTNDDYNVKQLRKRYDIPTSKAPKLLLKGSGNLKGSSVGYKDIEFTFVEKKEENIYFSDSLDYKKSGDV</sequence>
<comment type="subcellular location">
    <subcellularLocation>
        <location evidence="1">Cell membrane</location>
        <topology evidence="1">Lipid-anchor</topology>
    </subcellularLocation>
</comment>
<comment type="similarity">
    <text evidence="2">Belongs to the staphylococcal tandem lipoprotein family.</text>
</comment>
<comment type="sequence caution" evidence="2">
    <conflict type="erroneous initiation">
        <sequence resource="EMBL-CDS" id="BAB93936"/>
    </conflict>
</comment>
<organism>
    <name type="scientific">Staphylococcus aureus (strain MW2)</name>
    <dbReference type="NCBI Taxonomy" id="196620"/>
    <lineage>
        <taxon>Bacteria</taxon>
        <taxon>Bacillati</taxon>
        <taxon>Bacillota</taxon>
        <taxon>Bacilli</taxon>
        <taxon>Bacillales</taxon>
        <taxon>Staphylococcaceae</taxon>
        <taxon>Staphylococcus</taxon>
    </lineage>
</organism>
<dbReference type="EMBL" id="BA000033">
    <property type="protein sequence ID" value="BAB93936.1"/>
    <property type="status" value="ALT_INIT"/>
    <property type="molecule type" value="Genomic_DNA"/>
</dbReference>
<dbReference type="SMR" id="Q8NYU2"/>
<dbReference type="KEGG" id="sam:MW0071"/>
<dbReference type="HOGENOM" id="CLU_071589_0_1_9"/>
<dbReference type="GO" id="GO:0005886">
    <property type="term" value="C:plasma membrane"/>
    <property type="evidence" value="ECO:0007669"/>
    <property type="project" value="UniProtKB-SubCell"/>
</dbReference>
<dbReference type="Gene3D" id="2.50.20.40">
    <property type="match status" value="1"/>
</dbReference>
<dbReference type="InterPro" id="IPR007595">
    <property type="entry name" value="Csa"/>
</dbReference>
<dbReference type="InterPro" id="IPR038641">
    <property type="entry name" value="Csa_sf"/>
</dbReference>
<dbReference type="NCBIfam" id="TIGR01742">
    <property type="entry name" value="SA_tandem_lipo"/>
    <property type="match status" value="1"/>
</dbReference>
<dbReference type="Pfam" id="PF04507">
    <property type="entry name" value="DUF576"/>
    <property type="match status" value="1"/>
</dbReference>
<dbReference type="PROSITE" id="PS51257">
    <property type="entry name" value="PROKAR_LIPOPROTEIN"/>
    <property type="match status" value="1"/>
</dbReference>
<proteinExistence type="inferred from homology"/>
<name>Y071_STAAW</name>
<keyword id="KW-1003">Cell membrane</keyword>
<keyword id="KW-0449">Lipoprotein</keyword>
<keyword id="KW-0472">Membrane</keyword>
<keyword id="KW-0564">Palmitate</keyword>
<keyword id="KW-0732">Signal</keyword>
<reference key="1">
    <citation type="journal article" date="2002" name="Lancet">
        <title>Genome and virulence determinants of high virulence community-acquired MRSA.</title>
        <authorList>
            <person name="Baba T."/>
            <person name="Takeuchi F."/>
            <person name="Kuroda M."/>
            <person name="Yuzawa H."/>
            <person name="Aoki K."/>
            <person name="Oguchi A."/>
            <person name="Nagai Y."/>
            <person name="Iwama N."/>
            <person name="Asano K."/>
            <person name="Naimi T."/>
            <person name="Kuroda H."/>
            <person name="Cui L."/>
            <person name="Yamamoto K."/>
            <person name="Hiramatsu K."/>
        </authorList>
    </citation>
    <scope>NUCLEOTIDE SEQUENCE [LARGE SCALE GENOMIC DNA]</scope>
    <source>
        <strain>MW2</strain>
    </source>
</reference>
<accession>Q8NYU2</accession>
<protein>
    <recommendedName>
        <fullName>Uncharacterized lipoprotein MW0071</fullName>
    </recommendedName>
</protein>
<gene>
    <name type="ordered locus">MW0071</name>
</gene>